<sequence>MGQKVNPVGLRLGINRNWTSRWFPSARTAPSNIDEDNKIRKFLKKELYYAGVSEIVIERAAKKLRVTVVAARPGLIIGKKGVDIEKVKEGLKTLIKKEVSINIKEVKRPQADAQLAAENVATQLEKRVAFRRAMKKVMQAALKSGAKGIKVRVSGRLAGAEIARTEWYMEGRVPLHTLRAKIDYGFAEAMTVYGIIGVKVWIFKGEVLQKGIQFEKKEEAKEEREPRRSRRGRQ</sequence>
<name>RS3_HELPS</name>
<comment type="function">
    <text evidence="1">Binds the lower part of the 30S subunit head. Binds mRNA in the 70S ribosome, positioning it for translation.</text>
</comment>
<comment type="subunit">
    <text evidence="1">Part of the 30S ribosomal subunit. Forms a tight complex with proteins S10 and S14.</text>
</comment>
<comment type="similarity">
    <text evidence="1">Belongs to the universal ribosomal protein uS3 family.</text>
</comment>
<gene>
    <name evidence="1" type="primary">rpsC</name>
    <name type="ordered locus">HPSH_06790</name>
</gene>
<accession>B2UV76</accession>
<evidence type="ECO:0000255" key="1">
    <source>
        <dbReference type="HAMAP-Rule" id="MF_01309"/>
    </source>
</evidence>
<evidence type="ECO:0000305" key="2"/>
<reference key="1">
    <citation type="submission" date="2008-05" db="EMBL/GenBank/DDBJ databases">
        <title>Genome sequence of Helicobacter pylori from the remote Amazon: traces of Asian ancestry of the first Americans.</title>
        <authorList>
            <person name="Kersulyte D."/>
            <person name="Kalia A."/>
            <person name="Gilman R.H."/>
            <person name="Berg D.E."/>
        </authorList>
    </citation>
    <scope>NUCLEOTIDE SEQUENCE [LARGE SCALE GENOMIC DNA]</scope>
    <source>
        <strain>Shi470</strain>
    </source>
</reference>
<organism>
    <name type="scientific">Helicobacter pylori (strain Shi470)</name>
    <dbReference type="NCBI Taxonomy" id="512562"/>
    <lineage>
        <taxon>Bacteria</taxon>
        <taxon>Pseudomonadati</taxon>
        <taxon>Campylobacterota</taxon>
        <taxon>Epsilonproteobacteria</taxon>
        <taxon>Campylobacterales</taxon>
        <taxon>Helicobacteraceae</taxon>
        <taxon>Helicobacter</taxon>
    </lineage>
</organism>
<proteinExistence type="inferred from homology"/>
<dbReference type="EMBL" id="CP001072">
    <property type="protein sequence ID" value="ACD48758.1"/>
    <property type="molecule type" value="Genomic_DNA"/>
</dbReference>
<dbReference type="RefSeq" id="WP_000529972.1">
    <property type="nucleotide sequence ID" value="NC_010698.2"/>
</dbReference>
<dbReference type="SMR" id="B2UV76"/>
<dbReference type="KEGG" id="hps:HPSH_06790"/>
<dbReference type="HOGENOM" id="CLU_058591_0_2_7"/>
<dbReference type="GO" id="GO:0022627">
    <property type="term" value="C:cytosolic small ribosomal subunit"/>
    <property type="evidence" value="ECO:0007669"/>
    <property type="project" value="TreeGrafter"/>
</dbReference>
<dbReference type="GO" id="GO:0003729">
    <property type="term" value="F:mRNA binding"/>
    <property type="evidence" value="ECO:0007669"/>
    <property type="project" value="UniProtKB-UniRule"/>
</dbReference>
<dbReference type="GO" id="GO:0019843">
    <property type="term" value="F:rRNA binding"/>
    <property type="evidence" value="ECO:0007669"/>
    <property type="project" value="UniProtKB-UniRule"/>
</dbReference>
<dbReference type="GO" id="GO:0003735">
    <property type="term" value="F:structural constituent of ribosome"/>
    <property type="evidence" value="ECO:0007669"/>
    <property type="project" value="InterPro"/>
</dbReference>
<dbReference type="GO" id="GO:0006412">
    <property type="term" value="P:translation"/>
    <property type="evidence" value="ECO:0007669"/>
    <property type="project" value="UniProtKB-UniRule"/>
</dbReference>
<dbReference type="CDD" id="cd02412">
    <property type="entry name" value="KH-II_30S_S3"/>
    <property type="match status" value="1"/>
</dbReference>
<dbReference type="FunFam" id="3.30.1140.32:FF:000006">
    <property type="entry name" value="30S ribosomal protein S3"/>
    <property type="match status" value="1"/>
</dbReference>
<dbReference type="FunFam" id="3.30.300.20:FF:000001">
    <property type="entry name" value="30S ribosomal protein S3"/>
    <property type="match status" value="1"/>
</dbReference>
<dbReference type="Gene3D" id="3.30.300.20">
    <property type="match status" value="1"/>
</dbReference>
<dbReference type="Gene3D" id="3.30.1140.32">
    <property type="entry name" value="Ribosomal protein S3, C-terminal domain"/>
    <property type="match status" value="1"/>
</dbReference>
<dbReference type="HAMAP" id="MF_01309_B">
    <property type="entry name" value="Ribosomal_uS3_B"/>
    <property type="match status" value="1"/>
</dbReference>
<dbReference type="InterPro" id="IPR004087">
    <property type="entry name" value="KH_dom"/>
</dbReference>
<dbReference type="InterPro" id="IPR015946">
    <property type="entry name" value="KH_dom-like_a/b"/>
</dbReference>
<dbReference type="InterPro" id="IPR004044">
    <property type="entry name" value="KH_dom_type_2"/>
</dbReference>
<dbReference type="InterPro" id="IPR009019">
    <property type="entry name" value="KH_sf_prok-type"/>
</dbReference>
<dbReference type="InterPro" id="IPR036419">
    <property type="entry name" value="Ribosomal_S3_C_sf"/>
</dbReference>
<dbReference type="InterPro" id="IPR005704">
    <property type="entry name" value="Ribosomal_uS3_bac-typ"/>
</dbReference>
<dbReference type="InterPro" id="IPR001351">
    <property type="entry name" value="Ribosomal_uS3_C"/>
</dbReference>
<dbReference type="InterPro" id="IPR018280">
    <property type="entry name" value="Ribosomal_uS3_CS"/>
</dbReference>
<dbReference type="NCBIfam" id="TIGR01009">
    <property type="entry name" value="rpsC_bact"/>
    <property type="match status" value="1"/>
</dbReference>
<dbReference type="PANTHER" id="PTHR11760">
    <property type="entry name" value="30S/40S RIBOSOMAL PROTEIN S3"/>
    <property type="match status" value="1"/>
</dbReference>
<dbReference type="PANTHER" id="PTHR11760:SF19">
    <property type="entry name" value="SMALL RIBOSOMAL SUBUNIT PROTEIN US3C"/>
    <property type="match status" value="1"/>
</dbReference>
<dbReference type="Pfam" id="PF07650">
    <property type="entry name" value="KH_2"/>
    <property type="match status" value="1"/>
</dbReference>
<dbReference type="Pfam" id="PF00189">
    <property type="entry name" value="Ribosomal_S3_C"/>
    <property type="match status" value="1"/>
</dbReference>
<dbReference type="SMART" id="SM00322">
    <property type="entry name" value="KH"/>
    <property type="match status" value="1"/>
</dbReference>
<dbReference type="SUPFAM" id="SSF54814">
    <property type="entry name" value="Prokaryotic type KH domain (KH-domain type II)"/>
    <property type="match status" value="1"/>
</dbReference>
<dbReference type="SUPFAM" id="SSF54821">
    <property type="entry name" value="Ribosomal protein S3 C-terminal domain"/>
    <property type="match status" value="1"/>
</dbReference>
<dbReference type="PROSITE" id="PS50823">
    <property type="entry name" value="KH_TYPE_2"/>
    <property type="match status" value="1"/>
</dbReference>
<dbReference type="PROSITE" id="PS00548">
    <property type="entry name" value="RIBOSOMAL_S3"/>
    <property type="match status" value="1"/>
</dbReference>
<keyword id="KW-0687">Ribonucleoprotein</keyword>
<keyword id="KW-0689">Ribosomal protein</keyword>
<keyword id="KW-0694">RNA-binding</keyword>
<keyword id="KW-0699">rRNA-binding</keyword>
<protein>
    <recommendedName>
        <fullName evidence="1">Small ribosomal subunit protein uS3</fullName>
    </recommendedName>
    <alternativeName>
        <fullName evidence="2">30S ribosomal protein S3</fullName>
    </alternativeName>
</protein>
<feature type="chain" id="PRO_1000140978" description="Small ribosomal subunit protein uS3">
    <location>
        <begin position="1"/>
        <end position="234"/>
    </location>
</feature>
<feature type="domain" description="KH type-2" evidence="1">
    <location>
        <begin position="39"/>
        <end position="107"/>
    </location>
</feature>